<name>GATZ_SALEP</name>
<gene>
    <name evidence="1" type="primary">gatZ</name>
    <name type="ordered locus">SEN3092</name>
</gene>
<sequence>MKEIISRHKAGEQIGICSVCSAHPLVIESALRFDLNSGNKVLIEATSNQVNQFGGYTGMKPADFRDFVYGIAQEVGFPRERLILGGDHLGPNCWQNEPADTAMEKSVELIKAYVAAGFSKIHLDASMSCADDPTPLDPMVVAKRAALLCQAAETTATDEQKRHLTYVIGTEVPVPGGEASAINAVHVTREQDAARTLQTHQAAFRALGLDEALNRVIAIVVQPGVEFDHTQIIHYQPQAAQALSAWIKETPMVYEAHSTDYQTRQAYRALVRDHYAILKVGPALTFALREAIFALAQMENELISPEQRSRVLEVIDEVMLNEPGYWKKYYRPTWSQAMVDIHFSLSDRIRYYWPHPRIRQSVEKLIANLNNVTLPLGLISQFMPVQFERLSEGVLTPTPHNLIIDKIQDVLRAYRFGCTPDVA</sequence>
<organism>
    <name type="scientific">Salmonella enteritidis PT4 (strain P125109)</name>
    <dbReference type="NCBI Taxonomy" id="550537"/>
    <lineage>
        <taxon>Bacteria</taxon>
        <taxon>Pseudomonadati</taxon>
        <taxon>Pseudomonadota</taxon>
        <taxon>Gammaproteobacteria</taxon>
        <taxon>Enterobacterales</taxon>
        <taxon>Enterobacteriaceae</taxon>
        <taxon>Salmonella</taxon>
    </lineage>
</organism>
<reference key="1">
    <citation type="journal article" date="2008" name="Genome Res.">
        <title>Comparative genome analysis of Salmonella enteritidis PT4 and Salmonella gallinarum 287/91 provides insights into evolutionary and host adaptation pathways.</title>
        <authorList>
            <person name="Thomson N.R."/>
            <person name="Clayton D.J."/>
            <person name="Windhorst D."/>
            <person name="Vernikos G."/>
            <person name="Davidson S."/>
            <person name="Churcher C."/>
            <person name="Quail M.A."/>
            <person name="Stevens M."/>
            <person name="Jones M.A."/>
            <person name="Watson M."/>
            <person name="Barron A."/>
            <person name="Layton A."/>
            <person name="Pickard D."/>
            <person name="Kingsley R.A."/>
            <person name="Bignell A."/>
            <person name="Clark L."/>
            <person name="Harris B."/>
            <person name="Ormond D."/>
            <person name="Abdellah Z."/>
            <person name="Brooks K."/>
            <person name="Cherevach I."/>
            <person name="Chillingworth T."/>
            <person name="Woodward J."/>
            <person name="Norberczak H."/>
            <person name="Lord A."/>
            <person name="Arrowsmith C."/>
            <person name="Jagels K."/>
            <person name="Moule S."/>
            <person name="Mungall K."/>
            <person name="Saunders M."/>
            <person name="Whitehead S."/>
            <person name="Chabalgoity J.A."/>
            <person name="Maskell D."/>
            <person name="Humphreys T."/>
            <person name="Roberts M."/>
            <person name="Barrow P.A."/>
            <person name="Dougan G."/>
            <person name="Parkhill J."/>
        </authorList>
    </citation>
    <scope>NUCLEOTIDE SEQUENCE [LARGE SCALE GENOMIC DNA]</scope>
    <source>
        <strain>P125109</strain>
    </source>
</reference>
<feature type="chain" id="PRO_0000372510" description="D-tagatose-1,6-bisphosphate aldolase subunit GatZ">
    <location>
        <begin position="1"/>
        <end position="423"/>
    </location>
</feature>
<protein>
    <recommendedName>
        <fullName evidence="1">D-tagatose-1,6-bisphosphate aldolase subunit GatZ</fullName>
    </recommendedName>
</protein>
<proteinExistence type="inferred from homology"/>
<comment type="function">
    <text evidence="1">Component of the tagatose-1,6-bisphosphate aldolase GatYZ that is required for full activity and stability of the Y subunit. Could have a chaperone-like function for the proper and stable folding of GatY. When expressed alone, GatZ does not show any aldolase activity. Is involved in the catabolism of galactitol.</text>
</comment>
<comment type="pathway">
    <text evidence="1">Carbohydrate metabolism; D-tagatose 6-phosphate degradation; D-glyceraldehyde 3-phosphate and glycerone phosphate from D-tagatose 6-phosphate: step 2/2.</text>
</comment>
<comment type="subunit">
    <text evidence="1">Forms a complex with GatY.</text>
</comment>
<comment type="similarity">
    <text evidence="1">Belongs to the GatZ/KbaZ family. GatZ subfamily.</text>
</comment>
<accession>B5QZS9</accession>
<keyword id="KW-0298">Galactitol metabolism</keyword>
<dbReference type="EMBL" id="AM933172">
    <property type="protein sequence ID" value="CAR34668.1"/>
    <property type="molecule type" value="Genomic_DNA"/>
</dbReference>
<dbReference type="RefSeq" id="WP_000658738.1">
    <property type="nucleotide sequence ID" value="NC_011294.1"/>
</dbReference>
<dbReference type="SMR" id="B5QZS9"/>
<dbReference type="KEGG" id="set:SEN3092"/>
<dbReference type="HOGENOM" id="CLU_053334_0_0_6"/>
<dbReference type="UniPathway" id="UPA00704">
    <property type="reaction ID" value="UER00716"/>
</dbReference>
<dbReference type="Proteomes" id="UP000000613">
    <property type="component" value="Chromosome"/>
</dbReference>
<dbReference type="GO" id="GO:0005886">
    <property type="term" value="C:plasma membrane"/>
    <property type="evidence" value="ECO:0007669"/>
    <property type="project" value="TreeGrafter"/>
</dbReference>
<dbReference type="GO" id="GO:2001059">
    <property type="term" value="P:D-tagatose 6-phosphate catabolic process"/>
    <property type="evidence" value="ECO:0007669"/>
    <property type="project" value="UniProtKB-UniRule"/>
</dbReference>
<dbReference type="GO" id="GO:0019402">
    <property type="term" value="P:galactitol metabolic process"/>
    <property type="evidence" value="ECO:0007669"/>
    <property type="project" value="UniProtKB-KW"/>
</dbReference>
<dbReference type="GO" id="GO:0009401">
    <property type="term" value="P:phosphoenolpyruvate-dependent sugar phosphotransferase system"/>
    <property type="evidence" value="ECO:0007669"/>
    <property type="project" value="TreeGrafter"/>
</dbReference>
<dbReference type="FunFam" id="1.10.400.20:FF:000001">
    <property type="entry name" value="D-tagatose-1,6-bisphosphate aldolase subunit GatZ"/>
    <property type="match status" value="1"/>
</dbReference>
<dbReference type="FunFam" id="3.20.20.70:FF:000141">
    <property type="entry name" value="D-tagatose-1,6-bisphosphate aldolase subunit GatZ"/>
    <property type="match status" value="1"/>
</dbReference>
<dbReference type="Gene3D" id="3.20.20.70">
    <property type="entry name" value="Aldolase class I"/>
    <property type="match status" value="1"/>
</dbReference>
<dbReference type="Gene3D" id="1.10.400.20">
    <property type="entry name" value="putative tagatose 6-phosphate kinase domain like"/>
    <property type="match status" value="1"/>
</dbReference>
<dbReference type="HAMAP" id="MF_01296">
    <property type="entry name" value="Tagatose_aldol_GatZ"/>
    <property type="match status" value="1"/>
</dbReference>
<dbReference type="InterPro" id="IPR013785">
    <property type="entry name" value="Aldolase_TIM"/>
</dbReference>
<dbReference type="InterPro" id="IPR012062">
    <property type="entry name" value="GatZ/KbaZ-like"/>
</dbReference>
<dbReference type="InterPro" id="IPR050303">
    <property type="entry name" value="GatZ_KbaZ_carbometab"/>
</dbReference>
<dbReference type="InterPro" id="IPR023436">
    <property type="entry name" value="TagBP_ald_GatZ"/>
</dbReference>
<dbReference type="NCBIfam" id="TIGR02810">
    <property type="entry name" value="agaZ_gatZ"/>
    <property type="match status" value="1"/>
</dbReference>
<dbReference type="NCBIfam" id="NF011626">
    <property type="entry name" value="PRK15052.1"/>
    <property type="match status" value="1"/>
</dbReference>
<dbReference type="PANTHER" id="PTHR32502:SF12">
    <property type="entry name" value="D-TAGATOSE-1,6-BISPHOSPHATE ALDOLASE SUBUNIT GATZ"/>
    <property type="match status" value="1"/>
</dbReference>
<dbReference type="PANTHER" id="PTHR32502">
    <property type="entry name" value="N-ACETYLGALACTOSAMINE PERMEASE II COMPONENT-RELATED"/>
    <property type="match status" value="1"/>
</dbReference>
<dbReference type="Pfam" id="PF08013">
    <property type="entry name" value="GatZ_KbaZ-like"/>
    <property type="match status" value="1"/>
</dbReference>
<dbReference type="PIRSF" id="PIRSF009264">
    <property type="entry name" value="TagBP_ald_AgaZ"/>
    <property type="match status" value="1"/>
</dbReference>
<dbReference type="SUPFAM" id="SSF51569">
    <property type="entry name" value="Aldolase"/>
    <property type="match status" value="1"/>
</dbReference>
<evidence type="ECO:0000255" key="1">
    <source>
        <dbReference type="HAMAP-Rule" id="MF_01296"/>
    </source>
</evidence>